<accession>Q7Z200</accession>
<protein>
    <recommendedName>
        <fullName>Calcium up-regulated protein E</fullName>
    </recommendedName>
</protein>
<reference key="1">
    <citation type="journal article" date="2004" name="Eukaryot. Cell">
        <title>The Ca2+/calcineurin-regulated cup gene family in Dictyostelium discoideum and its possible involvement in development.</title>
        <authorList>
            <person name="Coukell B."/>
            <person name="Li Y."/>
            <person name="Moniakis J."/>
            <person name="Cameron A."/>
        </authorList>
    </citation>
    <scope>NUCLEOTIDE SEQUENCE [GENOMIC DNA]</scope>
    <scope>INDUCTION</scope>
</reference>
<name>CUPE_DICDI</name>
<keyword id="KW-0963">Cytoplasm</keyword>
<keyword id="KW-0430">Lectin</keyword>
<keyword id="KW-0472">Membrane</keyword>
<keyword id="KW-0677">Repeat</keyword>
<gene>
    <name type="primary">cupE</name>
    <name type="ORF">DDB_G0294531</name>
</gene>
<organism>
    <name type="scientific">Dictyostelium discoideum</name>
    <name type="common">Social amoeba</name>
    <dbReference type="NCBI Taxonomy" id="44689"/>
    <lineage>
        <taxon>Eukaryota</taxon>
        <taxon>Amoebozoa</taxon>
        <taxon>Evosea</taxon>
        <taxon>Eumycetozoa</taxon>
        <taxon>Dictyostelia</taxon>
        <taxon>Dictyosteliales</taxon>
        <taxon>Dictyosteliaceae</taxon>
        <taxon>Dictyostelium</taxon>
    </lineage>
</organism>
<proteinExistence type="evidence at transcript level"/>
<comment type="function">
    <text evidence="1">May play an important role in stabilizing and/or regulating the cell membrane during Ca(2+) stress or certain stages of development.</text>
</comment>
<comment type="subcellular location">
    <subcellularLocation>
        <location>Cytoplasm</location>
    </subcellularLocation>
    <subcellularLocation>
        <location evidence="1">Membrane</location>
        <topology evidence="1">Peripheral membrane protein</topology>
    </subcellularLocation>
</comment>
<comment type="induction">
    <text evidence="4">Induced by high levels of extracellular Ca(2+).</text>
</comment>
<comment type="similarity">
    <text evidence="5">Belongs to the cup family.</text>
</comment>
<feature type="chain" id="PRO_0000327953" description="Calcium up-regulated protein E">
    <location>
        <begin position="1"/>
        <end position="758"/>
    </location>
</feature>
<feature type="domain" description="Ricin B-type lectin 1" evidence="2">
    <location>
        <begin position="25"/>
        <end position="145"/>
    </location>
</feature>
<feature type="domain" description="Ricin B-type lectin 2" evidence="2">
    <location>
        <begin position="156"/>
        <end position="288"/>
    </location>
</feature>
<feature type="region of interest" description="Disordered" evidence="3">
    <location>
        <begin position="1"/>
        <end position="22"/>
    </location>
</feature>
<dbReference type="EMBL" id="AY282571">
    <property type="protein sequence ID" value="AAP40293.1"/>
    <property type="molecule type" value="Genomic_DNA"/>
</dbReference>
<dbReference type="CAZy" id="CBM13">
    <property type="family name" value="Carbohydrate-Binding Module Family 13"/>
</dbReference>
<dbReference type="VEuPathDB" id="AmoebaDB:DDB_G0289283"/>
<dbReference type="GO" id="GO:0005737">
    <property type="term" value="C:cytoplasm"/>
    <property type="evidence" value="ECO:0007669"/>
    <property type="project" value="UniProtKB-SubCell"/>
</dbReference>
<dbReference type="GO" id="GO:0016020">
    <property type="term" value="C:membrane"/>
    <property type="evidence" value="ECO:0007669"/>
    <property type="project" value="UniProtKB-SubCell"/>
</dbReference>
<dbReference type="GO" id="GO:0005634">
    <property type="term" value="C:nucleus"/>
    <property type="evidence" value="ECO:0007669"/>
    <property type="project" value="UniProtKB-ARBA"/>
</dbReference>
<dbReference type="GO" id="GO:0030246">
    <property type="term" value="F:carbohydrate binding"/>
    <property type="evidence" value="ECO:0007669"/>
    <property type="project" value="UniProtKB-KW"/>
</dbReference>
<dbReference type="GO" id="GO:0043157">
    <property type="term" value="P:response to cation stress"/>
    <property type="evidence" value="ECO:0007669"/>
    <property type="project" value="UniProtKB-ARBA"/>
</dbReference>
<dbReference type="CDD" id="cd00161">
    <property type="entry name" value="beta-trefoil_Ricin-like"/>
    <property type="match status" value="1"/>
</dbReference>
<dbReference type="Gene3D" id="2.80.10.50">
    <property type="match status" value="1"/>
</dbReference>
<dbReference type="InterPro" id="IPR051780">
    <property type="entry name" value="Ca_Up-reg_Membrane_Reg"/>
</dbReference>
<dbReference type="InterPro" id="IPR035992">
    <property type="entry name" value="Ricin_B-like_lectins"/>
</dbReference>
<dbReference type="InterPro" id="IPR000772">
    <property type="entry name" value="Ricin_B_lectin"/>
</dbReference>
<dbReference type="PANTHER" id="PTHR31599">
    <property type="entry name" value="CALCIUM UP-REGULATED PROTEIN A-RELATED"/>
    <property type="match status" value="1"/>
</dbReference>
<dbReference type="PANTHER" id="PTHR31599:SF2">
    <property type="entry name" value="CALCIUM UP-REGULATED PROTEIN A-RELATED"/>
    <property type="match status" value="1"/>
</dbReference>
<dbReference type="Pfam" id="PF00652">
    <property type="entry name" value="Ricin_B_lectin"/>
    <property type="match status" value="1"/>
</dbReference>
<dbReference type="SUPFAM" id="SSF50370">
    <property type="entry name" value="Ricin B-like lectins"/>
    <property type="match status" value="2"/>
</dbReference>
<dbReference type="PROSITE" id="PS50231">
    <property type="entry name" value="RICIN_B_LECTIN"/>
    <property type="match status" value="1"/>
</dbReference>
<evidence type="ECO:0000250" key="1"/>
<evidence type="ECO:0000255" key="2">
    <source>
        <dbReference type="PROSITE-ProRule" id="PRU00174"/>
    </source>
</evidence>
<evidence type="ECO:0000256" key="3">
    <source>
        <dbReference type="SAM" id="MobiDB-lite"/>
    </source>
</evidence>
<evidence type="ECO:0000269" key="4">
    <source>
    </source>
</evidence>
<evidence type="ECO:0000305" key="5"/>
<sequence length="758" mass="84187">MINIEDISKSSNQSEEKQLKSTSSKPKYSFAAKSLFKGSNNITPYYLSTSNTFQCVASESIQTWLLSDDGHIFTSSGNFVLDVSSGGYFVELVQLNSNSKTQIWTIDTTNNKIQNQGNGKYLDIDNLNIYVAPLNGNATQQWTTFRRAPIPTGNWGYFQSKQLDSNNNYWGLSVLNNSTSYNTSVVMNKVQAKSIKRWSHFITFGGNLVLDIGPSINGSKTYYLNTNVYKANDLMQQWGINENNQIFNQYYPNLCIGFVGELGVDSTVNCVLAQPSSACDINFQWIANPTYSLNQIVSEVPEQFPAYTSGDLLASYQYLSDDATNGYTDDIRSLYTSINVSLENFYVNVTNATCPSSIHQLKIFQNQIKNELTYAINVRLVFDNYSGFYSKLFSQGSTNLTNLANLINVDMSSDQVVNGNYTDAITSVFYAIISEIPIGGSIIANIGESAEEFGELDAESNDSGPSTYQVTLSKLYDHLNENYENEMANAQRMKNTILQDWGMMSKTFTLCFLPTNNPSSLNMNGFDFQKISSIASLAYLTAMIQMLLPTNYQIYFTPAGYYAPVSSDDYSYTDSTGTYIMAEIDNCNSHPPKALTDKLWKNGVSKQEVFTSSYGWNLATSVTYYNMVGKYGGMFKLSFPTVKNITSVPMQFVMTNGSDRVGTFNVKTHFAGLASTYYNSGALGHHYYDIAVTDIDRNKVANFTVDNNLEALEGSYVSIKTNSLVVQPGYVVGNPTCNQGSFSQGFAASILIPIYKSN</sequence>